<proteinExistence type="evidence at protein level"/>
<dbReference type="EC" id="2.4.1.109" evidence="1"/>
<dbReference type="EMBL" id="AK044857">
    <property type="protein sequence ID" value="BAC32122.1"/>
    <property type="molecule type" value="mRNA"/>
</dbReference>
<dbReference type="EMBL" id="AK165838">
    <property type="protein sequence ID" value="BAE38405.1"/>
    <property type="molecule type" value="mRNA"/>
</dbReference>
<dbReference type="EMBL" id="AC153501">
    <property type="status" value="NOT_ANNOTATED_CDS"/>
    <property type="molecule type" value="Genomic_DNA"/>
</dbReference>
<dbReference type="CCDS" id="CCDS24150.1">
    <molecule id="Q8BRH0-2"/>
</dbReference>
<dbReference type="CCDS" id="CCDS48684.1">
    <molecule id="Q8BRH0-1"/>
</dbReference>
<dbReference type="RefSeq" id="NP_001028504.1">
    <property type="nucleotide sequence ID" value="NM_001033332.2"/>
</dbReference>
<dbReference type="RefSeq" id="NP_001103483.1">
    <property type="nucleotide sequence ID" value="NM_001110013.1"/>
</dbReference>
<dbReference type="SMR" id="Q8BRH0"/>
<dbReference type="BioGRID" id="231882">
    <property type="interactions" value="4"/>
</dbReference>
<dbReference type="FunCoup" id="Q8BRH0">
    <property type="interactions" value="2000"/>
</dbReference>
<dbReference type="STRING" id="10090.ENSMUSP00000061470"/>
<dbReference type="GlyConnect" id="2781">
    <property type="glycosylation" value="1 N-Linked glycan (1 site)"/>
</dbReference>
<dbReference type="GlyCosmos" id="Q8BRH0">
    <property type="glycosylation" value="2 sites, 1 glycan"/>
</dbReference>
<dbReference type="GlyGen" id="Q8BRH0">
    <property type="glycosylation" value="3 sites, 1 N-linked glycan (1 site)"/>
</dbReference>
<dbReference type="iPTMnet" id="Q8BRH0"/>
<dbReference type="PhosphoSitePlus" id="Q8BRH0"/>
<dbReference type="PaxDb" id="10090-ENSMUSP00000061470"/>
<dbReference type="PeptideAtlas" id="Q8BRH0"/>
<dbReference type="ProteomicsDB" id="259052">
    <molecule id="Q8BRH0-1"/>
</dbReference>
<dbReference type="ProteomicsDB" id="259053">
    <molecule id="Q8BRH0-2"/>
</dbReference>
<dbReference type="Pumba" id="Q8BRH0"/>
<dbReference type="DNASU" id="237500"/>
<dbReference type="GeneID" id="237500"/>
<dbReference type="KEGG" id="mmu:237500"/>
<dbReference type="AGR" id="MGI:3036255"/>
<dbReference type="CTD" id="160418"/>
<dbReference type="MGI" id="MGI:3036255">
    <property type="gene designation" value="Tmtc3"/>
</dbReference>
<dbReference type="eggNOG" id="KOG1124">
    <property type="taxonomic scope" value="Eukaryota"/>
</dbReference>
<dbReference type="InParanoid" id="Q8BRH0"/>
<dbReference type="OrthoDB" id="66906at2759"/>
<dbReference type="PhylomeDB" id="Q8BRH0"/>
<dbReference type="UniPathway" id="UPA00378"/>
<dbReference type="BioGRID-ORCS" id="237500">
    <property type="hits" value="3 hits in 76 CRISPR screens"/>
</dbReference>
<dbReference type="ChiTaRS" id="Tmtc3">
    <property type="organism name" value="mouse"/>
</dbReference>
<dbReference type="PRO" id="PR:Q8BRH0"/>
<dbReference type="Proteomes" id="UP000000589">
    <property type="component" value="Unplaced"/>
</dbReference>
<dbReference type="RNAct" id="Q8BRH0">
    <property type="molecule type" value="protein"/>
</dbReference>
<dbReference type="GO" id="GO:0005783">
    <property type="term" value="C:endoplasmic reticulum"/>
    <property type="evidence" value="ECO:0000250"/>
    <property type="project" value="UniProtKB"/>
</dbReference>
<dbReference type="GO" id="GO:0016020">
    <property type="term" value="C:membrane"/>
    <property type="evidence" value="ECO:0007669"/>
    <property type="project" value="UniProtKB-SubCell"/>
</dbReference>
<dbReference type="GO" id="GO:0004169">
    <property type="term" value="F:dolichyl-phosphate-mannose-protein mannosyltransferase activity"/>
    <property type="evidence" value="ECO:0000250"/>
    <property type="project" value="UniProtKB"/>
</dbReference>
<dbReference type="GO" id="GO:0060447">
    <property type="term" value="P:bud outgrowth involved in lung branching"/>
    <property type="evidence" value="ECO:0000315"/>
    <property type="project" value="MGI"/>
</dbReference>
<dbReference type="GO" id="GO:0030154">
    <property type="term" value="P:cell differentiation"/>
    <property type="evidence" value="ECO:0000315"/>
    <property type="project" value="MGI"/>
</dbReference>
<dbReference type="GO" id="GO:0048286">
    <property type="term" value="P:lung alveolus development"/>
    <property type="evidence" value="ECO:0000315"/>
    <property type="project" value="MGI"/>
</dbReference>
<dbReference type="GO" id="GO:0030324">
    <property type="term" value="P:lung development"/>
    <property type="evidence" value="ECO:0000315"/>
    <property type="project" value="MGI"/>
</dbReference>
<dbReference type="GO" id="GO:0055001">
    <property type="term" value="P:muscle cell development"/>
    <property type="evidence" value="ECO:0000315"/>
    <property type="project" value="MGI"/>
</dbReference>
<dbReference type="GO" id="GO:1901800">
    <property type="term" value="P:positive regulation of proteasomal protein catabolic process"/>
    <property type="evidence" value="ECO:0000250"/>
    <property type="project" value="UniProtKB"/>
</dbReference>
<dbReference type="GO" id="GO:0009791">
    <property type="term" value="P:post-embryonic development"/>
    <property type="evidence" value="ECO:0000315"/>
    <property type="project" value="MGI"/>
</dbReference>
<dbReference type="GO" id="GO:0035269">
    <property type="term" value="P:protein O-linked mannosylation"/>
    <property type="evidence" value="ECO:0000250"/>
    <property type="project" value="UniProtKB"/>
</dbReference>
<dbReference type="GO" id="GO:0010468">
    <property type="term" value="P:regulation of gene expression"/>
    <property type="evidence" value="ECO:0000315"/>
    <property type="project" value="MGI"/>
</dbReference>
<dbReference type="GO" id="GO:0034976">
    <property type="term" value="P:response to endoplasmic reticulum stress"/>
    <property type="evidence" value="ECO:0000250"/>
    <property type="project" value="UniProtKB"/>
</dbReference>
<dbReference type="FunFam" id="1.25.40.10:FF:000239">
    <property type="entry name" value="Transmembrane and TPR repeat-containing protein 3"/>
    <property type="match status" value="1"/>
</dbReference>
<dbReference type="FunFam" id="1.25.40.10:FF:000528">
    <property type="entry name" value="Transmembrane and TPR repeat-containing protein 3"/>
    <property type="match status" value="1"/>
</dbReference>
<dbReference type="FunFam" id="1.25.40.10:FF:000175">
    <property type="entry name" value="transmembrane and TPR repeat-containing protein 3"/>
    <property type="match status" value="1"/>
</dbReference>
<dbReference type="Gene3D" id="1.25.40.10">
    <property type="entry name" value="Tetratricopeptide repeat domain"/>
    <property type="match status" value="4"/>
</dbReference>
<dbReference type="InterPro" id="IPR013618">
    <property type="entry name" value="TMTC_DUF1736"/>
</dbReference>
<dbReference type="InterPro" id="IPR011990">
    <property type="entry name" value="TPR-like_helical_dom_sf"/>
</dbReference>
<dbReference type="InterPro" id="IPR019734">
    <property type="entry name" value="TPR_rpt"/>
</dbReference>
<dbReference type="PANTHER" id="PTHR44395">
    <property type="match status" value="1"/>
</dbReference>
<dbReference type="PANTHER" id="PTHR44395:SF1">
    <property type="entry name" value="PROTEIN O-MANNOSYL-TRANSFERASE TMTC3"/>
    <property type="match status" value="1"/>
</dbReference>
<dbReference type="Pfam" id="PF08409">
    <property type="entry name" value="TMTC_DUF1736"/>
    <property type="match status" value="1"/>
</dbReference>
<dbReference type="Pfam" id="PF00515">
    <property type="entry name" value="TPR_1"/>
    <property type="match status" value="1"/>
</dbReference>
<dbReference type="Pfam" id="PF13174">
    <property type="entry name" value="TPR_6"/>
    <property type="match status" value="1"/>
</dbReference>
<dbReference type="Pfam" id="PF13181">
    <property type="entry name" value="TPR_8"/>
    <property type="match status" value="5"/>
</dbReference>
<dbReference type="SMART" id="SM00028">
    <property type="entry name" value="TPR"/>
    <property type="match status" value="9"/>
</dbReference>
<dbReference type="SUPFAM" id="SSF48439">
    <property type="entry name" value="Protein prenylyltransferase"/>
    <property type="match status" value="1"/>
</dbReference>
<dbReference type="SUPFAM" id="SSF48452">
    <property type="entry name" value="TPR-like"/>
    <property type="match status" value="2"/>
</dbReference>
<dbReference type="PROSITE" id="PS50005">
    <property type="entry name" value="TPR"/>
    <property type="match status" value="9"/>
</dbReference>
<dbReference type="PROSITE" id="PS50293">
    <property type="entry name" value="TPR_REGION"/>
    <property type="match status" value="4"/>
</dbReference>
<feature type="chain" id="PRO_0000280294" description="Protein O-mannosyl-transferase TMTC3">
    <location>
        <begin position="1"/>
        <end position="920"/>
    </location>
</feature>
<feature type="topological domain" description="Cytoplasmic" evidence="7">
    <location>
        <begin position="1"/>
        <end position="14"/>
    </location>
</feature>
<feature type="transmembrane region" description="Helical" evidence="2">
    <location>
        <begin position="15"/>
        <end position="35"/>
    </location>
</feature>
<feature type="topological domain" description="Extracellular" evidence="7">
    <location>
        <begin position="36"/>
        <end position="94"/>
    </location>
</feature>
<feature type="transmembrane region" description="Helical" evidence="2">
    <location>
        <begin position="95"/>
        <end position="115"/>
    </location>
</feature>
<feature type="topological domain" description="Cytoplasmic" evidence="7">
    <location>
        <begin position="116"/>
        <end position="125"/>
    </location>
</feature>
<feature type="transmembrane region" description="Helical" evidence="2">
    <location>
        <begin position="126"/>
        <end position="144"/>
    </location>
</feature>
<feature type="transmembrane region" description="Helical" evidence="2">
    <location>
        <begin position="145"/>
        <end position="163"/>
    </location>
</feature>
<feature type="topological domain" description="Cytoplasmic" evidence="7">
    <location>
        <begin position="164"/>
        <end position="171"/>
    </location>
</feature>
<feature type="transmembrane region" description="Helical" evidence="2">
    <location>
        <begin position="172"/>
        <end position="192"/>
    </location>
</feature>
<feature type="topological domain" description="Extracellular" evidence="7">
    <location>
        <begin position="193"/>
        <end position="198"/>
    </location>
</feature>
<feature type="transmembrane region" description="Helical" evidence="2">
    <location>
        <begin position="199"/>
        <end position="219"/>
    </location>
</feature>
<feature type="topological domain" description="Cytoplasmic" evidence="7">
    <location>
        <begin position="220"/>
        <end position="236"/>
    </location>
</feature>
<feature type="transmembrane region" description="Helical" evidence="2">
    <location>
        <begin position="237"/>
        <end position="257"/>
    </location>
</feature>
<feature type="topological domain" description="Extracellular" evidence="7">
    <location>
        <begin position="258"/>
        <end position="325"/>
    </location>
</feature>
<feature type="transmembrane region" description="Helical" evidence="2">
    <location>
        <begin position="326"/>
        <end position="346"/>
    </location>
</feature>
<feature type="topological domain" description="Cytoplasmic" evidence="7">
    <location>
        <begin position="347"/>
        <end position="358"/>
    </location>
</feature>
<feature type="transmembrane region" description="Helical" evidence="2">
    <location>
        <begin position="359"/>
        <end position="379"/>
    </location>
</feature>
<feature type="topological domain" description="Extracellular" evidence="7">
    <location>
        <begin position="380"/>
        <end position="381"/>
    </location>
</feature>
<feature type="transmembrane region" description="Helical" evidence="2">
    <location>
        <begin position="382"/>
        <end position="402"/>
    </location>
</feature>
<feature type="topological domain" description="Cytoplasmic" evidence="7">
    <location>
        <begin position="403"/>
        <end position="409"/>
    </location>
</feature>
<feature type="transmembrane region" description="Helical" evidence="2">
    <location>
        <begin position="410"/>
        <end position="428"/>
    </location>
</feature>
<feature type="topological domain" description="Extracellular" evidence="7">
    <location>
        <begin position="429"/>
        <end position="920"/>
    </location>
</feature>
<feature type="repeat" description="TPR 1" evidence="3">
    <location>
        <begin position="451"/>
        <end position="484"/>
    </location>
</feature>
<feature type="repeat" description="TPR 2" evidence="3">
    <location>
        <begin position="485"/>
        <end position="518"/>
    </location>
</feature>
<feature type="repeat" description="TPR 3" evidence="3">
    <location>
        <begin position="534"/>
        <end position="567"/>
    </location>
</feature>
<feature type="repeat" description="TPR 4" evidence="3">
    <location>
        <begin position="568"/>
        <end position="601"/>
    </location>
</feature>
<feature type="repeat" description="TPR 5" evidence="3">
    <location>
        <begin position="602"/>
        <end position="635"/>
    </location>
</feature>
<feature type="repeat" description="TPR 6" evidence="3">
    <location>
        <begin position="673"/>
        <end position="706"/>
    </location>
</feature>
<feature type="repeat" description="TPR 7" evidence="3">
    <location>
        <begin position="707"/>
        <end position="740"/>
    </location>
</feature>
<feature type="repeat" description="TPR 8" evidence="3">
    <location>
        <begin position="742"/>
        <end position="775"/>
    </location>
</feature>
<feature type="repeat" description="TPR 9" evidence="3">
    <location>
        <begin position="776"/>
        <end position="809"/>
    </location>
</feature>
<feature type="region of interest" description="Disordered" evidence="5">
    <location>
        <begin position="829"/>
        <end position="897"/>
    </location>
</feature>
<feature type="compositionally biased region" description="Basic and acidic residues" evidence="5">
    <location>
        <begin position="840"/>
        <end position="858"/>
    </location>
</feature>
<feature type="compositionally biased region" description="Low complexity" evidence="5">
    <location>
        <begin position="867"/>
        <end position="880"/>
    </location>
</feature>
<feature type="compositionally biased region" description="Basic and acidic residues" evidence="5">
    <location>
        <begin position="887"/>
        <end position="897"/>
    </location>
</feature>
<feature type="modified residue" description="Phosphotyrosine" evidence="1">
    <location>
        <position position="508"/>
    </location>
</feature>
<feature type="glycosylation site" description="N-linked (GlcNAc...) asparagine" evidence="4">
    <location>
        <position position="499"/>
    </location>
</feature>
<feature type="glycosylation site" description="N-linked (GlcNAc...) asparagine" evidence="4">
    <location>
        <position position="546"/>
    </location>
</feature>
<feature type="splice variant" id="VSP_023620" description="In isoform 2." evidence="6">
    <original>EVKLRPEA</original>
    <variation>KFPENVSI</variation>
    <location>
        <begin position="651"/>
        <end position="658"/>
    </location>
</feature>
<feature type="splice variant" id="VSP_023621" description="In isoform 2." evidence="6">
    <location>
        <begin position="659"/>
        <end position="920"/>
    </location>
</feature>
<feature type="sequence conflict" description="In Ref. 1; BAE38405." evidence="7" ref="1">
    <original>S</original>
    <variation>T</variation>
    <location>
        <position position="501"/>
    </location>
</feature>
<evidence type="ECO:0000250" key="1">
    <source>
        <dbReference type="UniProtKB" id="Q6ZXV5"/>
    </source>
</evidence>
<evidence type="ECO:0000255" key="2"/>
<evidence type="ECO:0000255" key="3">
    <source>
        <dbReference type="PROSITE-ProRule" id="PRU00339"/>
    </source>
</evidence>
<evidence type="ECO:0000255" key="4">
    <source>
        <dbReference type="PROSITE-ProRule" id="PRU00498"/>
    </source>
</evidence>
<evidence type="ECO:0000256" key="5">
    <source>
        <dbReference type="SAM" id="MobiDB-lite"/>
    </source>
</evidence>
<evidence type="ECO:0000303" key="6">
    <source>
    </source>
</evidence>
<evidence type="ECO:0000305" key="7"/>
<evidence type="ECO:0000312" key="8">
    <source>
        <dbReference type="MGI" id="MGI:3036255"/>
    </source>
</evidence>
<protein>
    <recommendedName>
        <fullName evidence="7">Protein O-mannosyl-transferase TMTC3</fullName>
        <ecNumber evidence="1">2.4.1.109</ecNumber>
    </recommendedName>
    <alternativeName>
        <fullName evidence="1">Transmembrane O-mannosyltransferase targeting cadherins 3</fullName>
    </alternativeName>
    <alternativeName>
        <fullName evidence="8">Transmembrane and tetratricopeptide repeat-containing 3</fullName>
    </alternativeName>
</protein>
<keyword id="KW-0025">Alternative splicing</keyword>
<keyword id="KW-0256">Endoplasmic reticulum</keyword>
<keyword id="KW-0325">Glycoprotein</keyword>
<keyword id="KW-0472">Membrane</keyword>
<keyword id="KW-0597">Phosphoprotein</keyword>
<keyword id="KW-1185">Reference proteome</keyword>
<keyword id="KW-0677">Repeat</keyword>
<keyword id="KW-0802">TPR repeat</keyword>
<keyword id="KW-0808">Transferase</keyword>
<keyword id="KW-0812">Transmembrane</keyword>
<keyword id="KW-1133">Transmembrane helix</keyword>
<name>TMTC3_MOUSE</name>
<sequence length="920" mass="104198">MLEGKMADINFKEVTLIVSVVAACYWNSLFCGFVFDDVSAILDNKDLHPSTPLKTLFQNDFWGTPMSEERSHKSYRPLTVLTFRLNYLLSELKPMSYHLLNTVFHAVVSVIFLKVCRLFLDKRSSMIAALLFAVHPIHTEAVTGVVGRAELLSSVFFLAAFLSYTKSKGPDNSIVWTPIVLTVFLVAVATLCKEQGITVVGICCVYEVFVAQGYTLPMLCTVAGQFLRGKGSIPLSMLQTLVKLIVLMLSTLLLVVVRVQVIQSQLPVFTRFDNPAAVSPTPTRQLTFNYLLPVNAWLLLNPSELCCDWTMGTIPLIESFLDVRNLATFAFFCFLGALGIFSLRYPGDSSKTVLMALCLMALPFIPASNLFFPVGFVVAERVLYVPSMGFCILVAHGWQKISNKSVLKKLSWVCLSMVILTHALKTLHRNWDWESEYTLFMSALKVNKNNAKLWNNVGHALENEKNFEKALKYFLQATHVQPDDIGAHMNVGRTYKNLNRSREAEASYMLAKSLMPQIIPGKKYAARIAPNHLNVYINLANLIRANESRLEEADQLYRQAISMRPDFKQAYISRGELLLKMNKPLKAKEAYLKALELDRNNADLWYNLAIVYIELKEPNEALKNFNRALELNPKHKLALFNSAILMQESGEVKLRPEARKRLLNYVNEEPQDANGYFNLGMLAMDDKKDSEAESWMKKAIKLQPDFRSALFNLALLYSQTAKELKALPILEELLKYYPDHTKGLILKGDILMNQKKDIPGAKKCFEKILEMDPSNVQGKHNLCVVYFEEKELLKAERCLVETLALAPHEEYIQRHLSIVRDRISSSGIVEQPLAPADKTPGTEEREEIPSEDVKEISSESRPPQILKTNNNRNSKSNKQSTENADQDAPHKTTKDIKEIEKKRVAALKRLEEIERILNGE</sequence>
<reference key="1">
    <citation type="journal article" date="2005" name="Science">
        <title>The transcriptional landscape of the mammalian genome.</title>
        <authorList>
            <person name="Carninci P."/>
            <person name="Kasukawa T."/>
            <person name="Katayama S."/>
            <person name="Gough J."/>
            <person name="Frith M.C."/>
            <person name="Maeda N."/>
            <person name="Oyama R."/>
            <person name="Ravasi T."/>
            <person name="Lenhard B."/>
            <person name="Wells C."/>
            <person name="Kodzius R."/>
            <person name="Shimokawa K."/>
            <person name="Bajic V.B."/>
            <person name="Brenner S.E."/>
            <person name="Batalov S."/>
            <person name="Forrest A.R."/>
            <person name="Zavolan M."/>
            <person name="Davis M.J."/>
            <person name="Wilming L.G."/>
            <person name="Aidinis V."/>
            <person name="Allen J.E."/>
            <person name="Ambesi-Impiombato A."/>
            <person name="Apweiler R."/>
            <person name="Aturaliya R.N."/>
            <person name="Bailey T.L."/>
            <person name="Bansal M."/>
            <person name="Baxter L."/>
            <person name="Beisel K.W."/>
            <person name="Bersano T."/>
            <person name="Bono H."/>
            <person name="Chalk A.M."/>
            <person name="Chiu K.P."/>
            <person name="Choudhary V."/>
            <person name="Christoffels A."/>
            <person name="Clutterbuck D.R."/>
            <person name="Crowe M.L."/>
            <person name="Dalla E."/>
            <person name="Dalrymple B.P."/>
            <person name="de Bono B."/>
            <person name="Della Gatta G."/>
            <person name="di Bernardo D."/>
            <person name="Down T."/>
            <person name="Engstrom P."/>
            <person name="Fagiolini M."/>
            <person name="Faulkner G."/>
            <person name="Fletcher C.F."/>
            <person name="Fukushima T."/>
            <person name="Furuno M."/>
            <person name="Futaki S."/>
            <person name="Gariboldi M."/>
            <person name="Georgii-Hemming P."/>
            <person name="Gingeras T.R."/>
            <person name="Gojobori T."/>
            <person name="Green R.E."/>
            <person name="Gustincich S."/>
            <person name="Harbers M."/>
            <person name="Hayashi Y."/>
            <person name="Hensch T.K."/>
            <person name="Hirokawa N."/>
            <person name="Hill D."/>
            <person name="Huminiecki L."/>
            <person name="Iacono M."/>
            <person name="Ikeo K."/>
            <person name="Iwama A."/>
            <person name="Ishikawa T."/>
            <person name="Jakt M."/>
            <person name="Kanapin A."/>
            <person name="Katoh M."/>
            <person name="Kawasawa Y."/>
            <person name="Kelso J."/>
            <person name="Kitamura H."/>
            <person name="Kitano H."/>
            <person name="Kollias G."/>
            <person name="Krishnan S.P."/>
            <person name="Kruger A."/>
            <person name="Kummerfeld S.K."/>
            <person name="Kurochkin I.V."/>
            <person name="Lareau L.F."/>
            <person name="Lazarevic D."/>
            <person name="Lipovich L."/>
            <person name="Liu J."/>
            <person name="Liuni S."/>
            <person name="McWilliam S."/>
            <person name="Madan Babu M."/>
            <person name="Madera M."/>
            <person name="Marchionni L."/>
            <person name="Matsuda H."/>
            <person name="Matsuzawa S."/>
            <person name="Miki H."/>
            <person name="Mignone F."/>
            <person name="Miyake S."/>
            <person name="Morris K."/>
            <person name="Mottagui-Tabar S."/>
            <person name="Mulder N."/>
            <person name="Nakano N."/>
            <person name="Nakauchi H."/>
            <person name="Ng P."/>
            <person name="Nilsson R."/>
            <person name="Nishiguchi S."/>
            <person name="Nishikawa S."/>
            <person name="Nori F."/>
            <person name="Ohara O."/>
            <person name="Okazaki Y."/>
            <person name="Orlando V."/>
            <person name="Pang K.C."/>
            <person name="Pavan W.J."/>
            <person name="Pavesi G."/>
            <person name="Pesole G."/>
            <person name="Petrovsky N."/>
            <person name="Piazza S."/>
            <person name="Reed J."/>
            <person name="Reid J.F."/>
            <person name="Ring B.Z."/>
            <person name="Ringwald M."/>
            <person name="Rost B."/>
            <person name="Ruan Y."/>
            <person name="Salzberg S.L."/>
            <person name="Sandelin A."/>
            <person name="Schneider C."/>
            <person name="Schoenbach C."/>
            <person name="Sekiguchi K."/>
            <person name="Semple C.A."/>
            <person name="Seno S."/>
            <person name="Sessa L."/>
            <person name="Sheng Y."/>
            <person name="Shibata Y."/>
            <person name="Shimada H."/>
            <person name="Shimada K."/>
            <person name="Silva D."/>
            <person name="Sinclair B."/>
            <person name="Sperling S."/>
            <person name="Stupka E."/>
            <person name="Sugiura K."/>
            <person name="Sultana R."/>
            <person name="Takenaka Y."/>
            <person name="Taki K."/>
            <person name="Tammoja K."/>
            <person name="Tan S.L."/>
            <person name="Tang S."/>
            <person name="Taylor M.S."/>
            <person name="Tegner J."/>
            <person name="Teichmann S.A."/>
            <person name="Ueda H.R."/>
            <person name="van Nimwegen E."/>
            <person name="Verardo R."/>
            <person name="Wei C.L."/>
            <person name="Yagi K."/>
            <person name="Yamanishi H."/>
            <person name="Zabarovsky E."/>
            <person name="Zhu S."/>
            <person name="Zimmer A."/>
            <person name="Hide W."/>
            <person name="Bult C."/>
            <person name="Grimmond S.M."/>
            <person name="Teasdale R.D."/>
            <person name="Liu E.T."/>
            <person name="Brusic V."/>
            <person name="Quackenbush J."/>
            <person name="Wahlestedt C."/>
            <person name="Mattick J.S."/>
            <person name="Hume D.A."/>
            <person name="Kai C."/>
            <person name="Sasaki D."/>
            <person name="Tomaru Y."/>
            <person name="Fukuda S."/>
            <person name="Kanamori-Katayama M."/>
            <person name="Suzuki M."/>
            <person name="Aoki J."/>
            <person name="Arakawa T."/>
            <person name="Iida J."/>
            <person name="Imamura K."/>
            <person name="Itoh M."/>
            <person name="Kato T."/>
            <person name="Kawaji H."/>
            <person name="Kawagashira N."/>
            <person name="Kawashima T."/>
            <person name="Kojima M."/>
            <person name="Kondo S."/>
            <person name="Konno H."/>
            <person name="Nakano K."/>
            <person name="Ninomiya N."/>
            <person name="Nishio T."/>
            <person name="Okada M."/>
            <person name="Plessy C."/>
            <person name="Shibata K."/>
            <person name="Shiraki T."/>
            <person name="Suzuki S."/>
            <person name="Tagami M."/>
            <person name="Waki K."/>
            <person name="Watahiki A."/>
            <person name="Okamura-Oho Y."/>
            <person name="Suzuki H."/>
            <person name="Kawai J."/>
            <person name="Hayashizaki Y."/>
        </authorList>
    </citation>
    <scope>NUCLEOTIDE SEQUENCE [LARGE SCALE MRNA] (ISOFORM 2)</scope>
    <scope>NUCLEOTIDE SEQUENCE [LARGE SCALE MRNA] OF 1-753 (ISOFORM 1)</scope>
    <source>
        <strain>C57BL/6J</strain>
        <tissue>Lung</tissue>
    </source>
</reference>
<reference key="2">
    <citation type="journal article" date="2009" name="PLoS Biol.">
        <title>Lineage-specific biology revealed by a finished genome assembly of the mouse.</title>
        <authorList>
            <person name="Church D.M."/>
            <person name="Goodstadt L."/>
            <person name="Hillier L.W."/>
            <person name="Zody M.C."/>
            <person name="Goldstein S."/>
            <person name="She X."/>
            <person name="Bult C.J."/>
            <person name="Agarwala R."/>
            <person name="Cherry J.L."/>
            <person name="DiCuccio M."/>
            <person name="Hlavina W."/>
            <person name="Kapustin Y."/>
            <person name="Meric P."/>
            <person name="Maglott D."/>
            <person name="Birtle Z."/>
            <person name="Marques A.C."/>
            <person name="Graves T."/>
            <person name="Zhou S."/>
            <person name="Teague B."/>
            <person name="Potamousis K."/>
            <person name="Churas C."/>
            <person name="Place M."/>
            <person name="Herschleb J."/>
            <person name="Runnheim R."/>
            <person name="Forrest D."/>
            <person name="Amos-Landgraf J."/>
            <person name="Schwartz D.C."/>
            <person name="Cheng Z."/>
            <person name="Lindblad-Toh K."/>
            <person name="Eichler E.E."/>
            <person name="Ponting C.P."/>
        </authorList>
    </citation>
    <scope>NUCLEOTIDE SEQUENCE [LARGE SCALE GENOMIC DNA]</scope>
    <source>
        <strain>C57BL/6J</strain>
    </source>
</reference>
<reference key="3">
    <citation type="journal article" date="2010" name="Cell">
        <title>A tissue-specific atlas of mouse protein phosphorylation and expression.</title>
        <authorList>
            <person name="Huttlin E.L."/>
            <person name="Jedrychowski M.P."/>
            <person name="Elias J.E."/>
            <person name="Goswami T."/>
            <person name="Rad R."/>
            <person name="Beausoleil S.A."/>
            <person name="Villen J."/>
            <person name="Haas W."/>
            <person name="Sowa M.E."/>
            <person name="Gygi S.P."/>
        </authorList>
    </citation>
    <scope>IDENTIFICATION BY MASS SPECTROMETRY [LARGE SCALE ANALYSIS]</scope>
    <source>
        <tissue>Kidney</tissue>
        <tissue>Pancreas</tissue>
    </source>
</reference>
<accession>Q8BRH0</accession>
<accession>Q3TMN6</accession>
<organism>
    <name type="scientific">Mus musculus</name>
    <name type="common">Mouse</name>
    <dbReference type="NCBI Taxonomy" id="10090"/>
    <lineage>
        <taxon>Eukaryota</taxon>
        <taxon>Metazoa</taxon>
        <taxon>Chordata</taxon>
        <taxon>Craniata</taxon>
        <taxon>Vertebrata</taxon>
        <taxon>Euteleostomi</taxon>
        <taxon>Mammalia</taxon>
        <taxon>Eutheria</taxon>
        <taxon>Euarchontoglires</taxon>
        <taxon>Glires</taxon>
        <taxon>Rodentia</taxon>
        <taxon>Myomorpha</taxon>
        <taxon>Muroidea</taxon>
        <taxon>Muridae</taxon>
        <taxon>Murinae</taxon>
        <taxon>Mus</taxon>
        <taxon>Mus</taxon>
    </lineage>
</organism>
<comment type="function">
    <text evidence="1">Transfers mannosyl residues to the hydroxyl group of serine or threonine residues. The 4 members of the TMTC family are O-mannosyl-transferases dedicated primarily to the cadherin superfamily, each member seems to have a distinct role in decorating the cadherin domains with O-linked mannose glycans at specific regions. Also acts as O-mannosyl-transferase on other proteins such as PDIA3. Involved in the positive regulation of proteasomal protein degradation in the endoplasmic reticulum (ER), and the control of ER stress response.</text>
</comment>
<comment type="catalytic activity">
    <reaction evidence="1">
        <text>a di-trans,poly-cis-dolichyl beta-D-mannosyl phosphate + L-seryl-[protein] = 3-O-(alpha-D-mannosyl)-L-seryl-[protein] + a di-trans,poly-cis-dolichyl phosphate + H(+)</text>
        <dbReference type="Rhea" id="RHEA:17377"/>
        <dbReference type="Rhea" id="RHEA-COMP:9863"/>
        <dbReference type="Rhea" id="RHEA-COMP:13546"/>
        <dbReference type="Rhea" id="RHEA-COMP:19498"/>
        <dbReference type="Rhea" id="RHEA-COMP:19501"/>
        <dbReference type="ChEBI" id="CHEBI:15378"/>
        <dbReference type="ChEBI" id="CHEBI:29999"/>
        <dbReference type="ChEBI" id="CHEBI:57683"/>
        <dbReference type="ChEBI" id="CHEBI:58211"/>
        <dbReference type="ChEBI" id="CHEBI:137321"/>
        <dbReference type="EC" id="2.4.1.109"/>
    </reaction>
</comment>
<comment type="catalytic activity">
    <reaction evidence="1">
        <text>a di-trans,poly-cis-dolichyl beta-D-mannosyl phosphate + L-threonyl-[protein] = 3-O-(alpha-D-mannosyl)-L-threonyl-[protein] + a di-trans,poly-cis-dolichyl phosphate + H(+)</text>
        <dbReference type="Rhea" id="RHEA:53396"/>
        <dbReference type="Rhea" id="RHEA-COMP:11060"/>
        <dbReference type="Rhea" id="RHEA-COMP:13547"/>
        <dbReference type="Rhea" id="RHEA-COMP:19498"/>
        <dbReference type="Rhea" id="RHEA-COMP:19501"/>
        <dbReference type="ChEBI" id="CHEBI:15378"/>
        <dbReference type="ChEBI" id="CHEBI:30013"/>
        <dbReference type="ChEBI" id="CHEBI:57683"/>
        <dbReference type="ChEBI" id="CHEBI:58211"/>
        <dbReference type="ChEBI" id="CHEBI:137323"/>
        <dbReference type="EC" id="2.4.1.109"/>
    </reaction>
</comment>
<comment type="pathway">
    <text evidence="1">Protein modification; protein glycosylation.</text>
</comment>
<comment type="subcellular location">
    <subcellularLocation>
        <location evidence="2">Membrane</location>
        <topology evidence="2">Multi-pass membrane protein</topology>
    </subcellularLocation>
    <subcellularLocation>
        <location evidence="1">Endoplasmic reticulum</location>
    </subcellularLocation>
</comment>
<comment type="alternative products">
    <event type="alternative splicing"/>
    <isoform>
        <id>Q8BRH0-1</id>
        <name>1</name>
        <sequence type="displayed"/>
    </isoform>
    <isoform>
        <id>Q8BRH0-2</id>
        <name>2</name>
        <sequence type="described" ref="VSP_023620 VSP_023621"/>
    </isoform>
</comment>
<comment type="similarity">
    <text evidence="7">Belongs to the TMTC family.</text>
</comment>
<gene>
    <name evidence="8" type="primary">Tmtc3</name>
</gene>